<accession>P84939</accession>
<protein>
    <recommendedName>
        <fullName evidence="5">Phylloseptin-Az6</fullName>
        <shortName evidence="5">PLS-Az6</shortName>
    </recommendedName>
    <alternativeName>
        <fullName evidence="4">Phylloseptin-14</fullName>
        <shortName evidence="4">PS-14</shortName>
    </alternativeName>
</protein>
<proteinExistence type="evidence at protein level"/>
<dbReference type="GO" id="GO:0005576">
    <property type="term" value="C:extracellular region"/>
    <property type="evidence" value="ECO:0007669"/>
    <property type="project" value="UniProtKB-SubCell"/>
</dbReference>
<dbReference type="GO" id="GO:0006952">
    <property type="term" value="P:defense response"/>
    <property type="evidence" value="ECO:0007669"/>
    <property type="project" value="UniProtKB-KW"/>
</dbReference>
<evidence type="ECO:0000250" key="1">
    <source>
        <dbReference type="UniProtKB" id="P84566"/>
    </source>
</evidence>
<evidence type="ECO:0000255" key="2"/>
<evidence type="ECO:0000269" key="3">
    <source>
    </source>
</evidence>
<evidence type="ECO:0000303" key="4">
    <source>
    </source>
</evidence>
<evidence type="ECO:0000305" key="5"/>
<keyword id="KW-0027">Amidation</keyword>
<keyword id="KW-0878">Amphibian defense peptide</keyword>
<keyword id="KW-0929">Antimicrobial</keyword>
<keyword id="KW-0903">Direct protein sequencing</keyword>
<keyword id="KW-0964">Secreted</keyword>
<name>PLS6_PITAZ</name>
<comment type="function">
    <text evidence="1">Has antimicrobial activity.</text>
</comment>
<comment type="subcellular location">
    <subcellularLocation>
        <location evidence="3">Secreted</location>
    </subcellularLocation>
</comment>
<comment type="tissue specificity">
    <text evidence="3">Expressed by the skin glands.</text>
</comment>
<comment type="mass spectrometry" mass="1941.21" method="Electrospray" evidence="3"/>
<comment type="similarity">
    <text evidence="2">Belongs to the frog skin active peptide (FSAP) family. Phylloseptin subfamily.</text>
</comment>
<organism>
    <name type="scientific">Pithecopus azureus</name>
    <name type="common">Orange-legged monkey tree frog</name>
    <name type="synonym">Phyllomedusa azurea</name>
    <dbReference type="NCBI Taxonomy" id="2034991"/>
    <lineage>
        <taxon>Eukaryota</taxon>
        <taxon>Metazoa</taxon>
        <taxon>Chordata</taxon>
        <taxon>Craniata</taxon>
        <taxon>Vertebrata</taxon>
        <taxon>Euteleostomi</taxon>
        <taxon>Amphibia</taxon>
        <taxon>Batrachia</taxon>
        <taxon>Anura</taxon>
        <taxon>Neobatrachia</taxon>
        <taxon>Hyloidea</taxon>
        <taxon>Hylidae</taxon>
        <taxon>Phyllomedusinae</taxon>
        <taxon>Pithecopus</taxon>
    </lineage>
</organism>
<sequence length="19" mass="1943">FLSLIPAAISAVSALADHF</sequence>
<reference evidence="5" key="1">
    <citation type="journal article" date="2007" name="Peptides">
        <title>A combined mass spectrometric and cDNA sequencing approach to the isolation and characterization of novel antimicrobial peptides from the skin secretions of Phyllomedusa hypochondrialis azurea.</title>
        <authorList>
            <person name="Thompson A.H."/>
            <person name="Bjourson A.J."/>
            <person name="Orr D.F."/>
            <person name="Shaw C."/>
            <person name="McClean S."/>
        </authorList>
    </citation>
    <scope>PROTEIN SEQUENCE</scope>
    <scope>SUBCELLULAR LOCATION</scope>
    <scope>TISSUE SPECIFICITY</scope>
    <scope>MASS SPECTROMETRY</scope>
    <scope>AMIDATION AT PHE-19</scope>
    <source>
        <tissue evidence="3">Skin secretion</tissue>
    </source>
</reference>
<feature type="peptide" id="PRO_0000250575" description="Phylloseptin-Az6" evidence="3">
    <location>
        <begin position="1"/>
        <end position="19"/>
    </location>
</feature>
<feature type="modified residue" description="Phenylalanine amide" evidence="3">
    <location>
        <position position="19"/>
    </location>
</feature>
<gene>
    <name type="primary">psn14</name>
    <name type="synonym">psn-14</name>
</gene>